<protein>
    <recommendedName>
        <fullName>Siderophore iron transporter mirB</fullName>
    </recommendedName>
    <alternativeName>
        <fullName>Major facilitator iron-regulated transporter B</fullName>
    </alternativeName>
    <alternativeName>
        <fullName>Triacetylfusarinine C permease</fullName>
    </alternativeName>
</protein>
<gene>
    <name type="primary">mirB</name>
    <name type="ORF">AN8540</name>
</gene>
<feature type="chain" id="PRO_0000084860" description="Siderophore iron transporter mirB">
    <location>
        <begin position="1"/>
        <end position="604"/>
    </location>
</feature>
<feature type="transmembrane region" description="Helical" evidence="1">
    <location>
        <begin position="73"/>
        <end position="95"/>
    </location>
</feature>
<feature type="transmembrane region" description="Helical" evidence="1">
    <location>
        <begin position="115"/>
        <end position="137"/>
    </location>
</feature>
<feature type="transmembrane region" description="Helical" evidence="1">
    <location>
        <begin position="149"/>
        <end position="168"/>
    </location>
</feature>
<feature type="transmembrane region" description="Helical" evidence="1">
    <location>
        <begin position="178"/>
        <end position="200"/>
    </location>
</feature>
<feature type="transmembrane region" description="Helical" evidence="1">
    <location>
        <begin position="207"/>
        <end position="224"/>
    </location>
</feature>
<feature type="transmembrane region" description="Helical" evidence="1">
    <location>
        <begin position="237"/>
        <end position="259"/>
    </location>
</feature>
<feature type="transmembrane region" description="Helical" evidence="1">
    <location>
        <begin position="289"/>
        <end position="311"/>
    </location>
</feature>
<feature type="transmembrane region" description="Helical" evidence="1">
    <location>
        <begin position="326"/>
        <end position="343"/>
    </location>
</feature>
<feature type="transmembrane region" description="Helical" evidence="1">
    <location>
        <begin position="363"/>
        <end position="385"/>
    </location>
</feature>
<feature type="transmembrane region" description="Helical" evidence="1">
    <location>
        <begin position="400"/>
        <end position="422"/>
    </location>
</feature>
<feature type="transmembrane region" description="Helical" evidence="1">
    <location>
        <begin position="427"/>
        <end position="449"/>
    </location>
</feature>
<feature type="transmembrane region" description="Helical" evidence="1">
    <location>
        <begin position="454"/>
        <end position="476"/>
    </location>
</feature>
<feature type="transmembrane region" description="Helical" evidence="1">
    <location>
        <begin position="489"/>
        <end position="511"/>
    </location>
</feature>
<feature type="transmembrane region" description="Helical" evidence="1">
    <location>
        <begin position="566"/>
        <end position="588"/>
    </location>
</feature>
<feature type="region of interest" description="Disordered" evidence="2">
    <location>
        <begin position="1"/>
        <end position="61"/>
    </location>
</feature>
<keyword id="KW-0406">Ion transport</keyword>
<keyword id="KW-0408">Iron</keyword>
<keyword id="KW-0410">Iron transport</keyword>
<keyword id="KW-0472">Membrane</keyword>
<keyword id="KW-1185">Reference proteome</keyword>
<keyword id="KW-0812">Transmembrane</keyword>
<keyword id="KW-1133">Transmembrane helix</keyword>
<keyword id="KW-0813">Transport</keyword>
<sequence>MTIGSKFSLLAGTRKTDGPTEISASSPPDVETPSAEKTATASAGNKEVGINDNSSDEALPSQHVQTGVQKIQAVTLVWSKWSLVAVFCLLWLVTLANGFRQSILYSLTPYATSSFQSHSLLTVINIVSSAMVSALYIPVAKVVDVWGRAEGWLVMVGLSTLGLIMMAASKNLETYCAADVFYSVGFAGMNYILCVLAADITNLRNRGIAFAFTSSPYMITAFAGSKAAEKFLVNVNWRWGFGAFAIIFPFVASPVYFVLKVGLNRAEKQGIIQPRLRSGRTLSQNFKYYFFAFDIPGVILLAGGLTVFLLPFTLATRAPNGWKSDYIIAMIVTGFVVMVLFVLYQAYWAPQPFLKYEFLTNRTVLGACLIDATYQMSYYCWNSYFNSFLQVVCNLPVAEAGYVGSTFQVVSGVLLFMVGFAIRKTGYFRWLLFIGVPLYIFAQGLMIHFRQPNQYIGYIVMCEIFISIGGSIFVLLQQLAVLVAVDHQYVAAALAVLFISGGIGGAVGNAISGAIWTNTFLPALMRNLPESAKANAVAIYGDLRVQLSYPVNSPERIAIQESYGYAQARMLAAGTGLMALMFIWMFMVKNYNVKNMSQTKGMVF</sequence>
<proteinExistence type="inferred from homology"/>
<accession>Q870L2</accession>
<accession>C8VEQ8</accession>
<accession>Q5AT40</accession>
<organism>
    <name type="scientific">Emericella nidulans (strain FGSC A4 / ATCC 38163 / CBS 112.46 / NRRL 194 / M139)</name>
    <name type="common">Aspergillus nidulans</name>
    <dbReference type="NCBI Taxonomy" id="227321"/>
    <lineage>
        <taxon>Eukaryota</taxon>
        <taxon>Fungi</taxon>
        <taxon>Dikarya</taxon>
        <taxon>Ascomycota</taxon>
        <taxon>Pezizomycotina</taxon>
        <taxon>Eurotiomycetes</taxon>
        <taxon>Eurotiomycetidae</taxon>
        <taxon>Eurotiales</taxon>
        <taxon>Aspergillaceae</taxon>
        <taxon>Aspergillus</taxon>
        <taxon>Aspergillus subgen. Nidulantes</taxon>
    </lineage>
</organism>
<evidence type="ECO:0000255" key="1"/>
<evidence type="ECO:0000256" key="2">
    <source>
        <dbReference type="SAM" id="MobiDB-lite"/>
    </source>
</evidence>
<evidence type="ECO:0000269" key="3">
    <source>
    </source>
</evidence>
<evidence type="ECO:0000305" key="4"/>
<dbReference type="EMBL" id="AY131330">
    <property type="protein sequence ID" value="AAN10149.1"/>
    <property type="molecule type" value="Genomic_DNA"/>
</dbReference>
<dbReference type="EMBL" id="AACD01000157">
    <property type="protein sequence ID" value="EAA66965.1"/>
    <property type="status" value="ALT_SEQ"/>
    <property type="molecule type" value="Genomic_DNA"/>
</dbReference>
<dbReference type="EMBL" id="BN001305">
    <property type="protein sequence ID" value="CBF80759.1"/>
    <property type="status" value="ALT_SEQ"/>
    <property type="molecule type" value="Genomic_DNA"/>
</dbReference>
<dbReference type="RefSeq" id="XP_681809.1">
    <property type="nucleotide sequence ID" value="XM_676717.1"/>
</dbReference>
<dbReference type="SMR" id="Q870L2"/>
<dbReference type="STRING" id="227321.Q870L2"/>
<dbReference type="TCDB" id="2.A.1.16.7">
    <property type="family name" value="the major facilitator superfamily (mfs)"/>
</dbReference>
<dbReference type="KEGG" id="ani:ANIA_08540"/>
<dbReference type="VEuPathDB" id="FungiDB:AN8540"/>
<dbReference type="eggNOG" id="KOG0254">
    <property type="taxonomic scope" value="Eukaryota"/>
</dbReference>
<dbReference type="HOGENOM" id="CLU_012970_1_0_1"/>
<dbReference type="InParanoid" id="Q870L2"/>
<dbReference type="OrthoDB" id="4078873at2759"/>
<dbReference type="Proteomes" id="UP000000560">
    <property type="component" value="Chromosome V"/>
</dbReference>
<dbReference type="GO" id="GO:0005886">
    <property type="term" value="C:plasma membrane"/>
    <property type="evidence" value="ECO:0000318"/>
    <property type="project" value="GO_Central"/>
</dbReference>
<dbReference type="GO" id="GO:0022857">
    <property type="term" value="F:transmembrane transporter activity"/>
    <property type="evidence" value="ECO:0000318"/>
    <property type="project" value="GO_Central"/>
</dbReference>
<dbReference type="GO" id="GO:0010106">
    <property type="term" value="P:cellular response to iron ion starvation"/>
    <property type="evidence" value="ECO:0000270"/>
    <property type="project" value="AspGD"/>
</dbReference>
<dbReference type="GO" id="GO:0015686">
    <property type="term" value="P:ferric triacetylfusarinine C import into cell"/>
    <property type="evidence" value="ECO:0000314"/>
    <property type="project" value="AspGD"/>
</dbReference>
<dbReference type="GO" id="GO:0055085">
    <property type="term" value="P:transmembrane transport"/>
    <property type="evidence" value="ECO:0000318"/>
    <property type="project" value="GO_Central"/>
</dbReference>
<dbReference type="CDD" id="cd17322">
    <property type="entry name" value="MFS_ARN_like"/>
    <property type="match status" value="1"/>
</dbReference>
<dbReference type="FunFam" id="1.20.1250.20:FF:000302">
    <property type="entry name" value="MFS siderochrome iron transporter MirB"/>
    <property type="match status" value="1"/>
</dbReference>
<dbReference type="FunFam" id="1.20.1250.20:FF:000284">
    <property type="entry name" value="Siderophore iron transporter mirB"/>
    <property type="match status" value="1"/>
</dbReference>
<dbReference type="Gene3D" id="1.20.1250.20">
    <property type="entry name" value="MFS general substrate transporter like domains"/>
    <property type="match status" value="2"/>
</dbReference>
<dbReference type="InterPro" id="IPR011701">
    <property type="entry name" value="MFS"/>
</dbReference>
<dbReference type="InterPro" id="IPR020846">
    <property type="entry name" value="MFS_dom"/>
</dbReference>
<dbReference type="InterPro" id="IPR036259">
    <property type="entry name" value="MFS_trans_sf"/>
</dbReference>
<dbReference type="PANTHER" id="PTHR23501">
    <property type="entry name" value="MAJOR FACILITATOR SUPERFAMILY"/>
    <property type="match status" value="1"/>
</dbReference>
<dbReference type="PANTHER" id="PTHR23501:SF50">
    <property type="entry name" value="MFS SIDEROCHROME IRON TRANSPORTER MIRB (AFU_ORTHOLOGUE AFUA_3G03640)-RELATED"/>
    <property type="match status" value="1"/>
</dbReference>
<dbReference type="Pfam" id="PF07690">
    <property type="entry name" value="MFS_1"/>
    <property type="match status" value="1"/>
</dbReference>
<dbReference type="SUPFAM" id="SSF103473">
    <property type="entry name" value="MFS general substrate transporter"/>
    <property type="match status" value="2"/>
</dbReference>
<dbReference type="PROSITE" id="PS50850">
    <property type="entry name" value="MFS"/>
    <property type="match status" value="1"/>
</dbReference>
<comment type="function">
    <text evidence="3">Involved in the transport of siderophore triacestylfusarinine C and so has a role in iron homeostasis.</text>
</comment>
<comment type="subcellular location">
    <subcellularLocation>
        <location evidence="4">Membrane</location>
        <topology evidence="4">Multi-pass membrane protein</topology>
    </subcellularLocation>
</comment>
<comment type="similarity">
    <text evidence="4">Belongs to the major facilitator superfamily.</text>
</comment>
<comment type="sequence caution" evidence="4">
    <conflict type="erroneous gene model prediction">
        <sequence resource="EMBL-CDS" id="CBF80759"/>
    </conflict>
</comment>
<comment type="sequence caution" evidence="4">
    <conflict type="erroneous gene model prediction">
        <sequence resource="EMBL-CDS" id="EAA66965"/>
    </conflict>
</comment>
<reference key="1">
    <citation type="journal article" date="2003" name="Biochem. J.">
        <title>Characterization of the Aspergillus nidulans transporters for the siderophores enterobactin and triacetylfusarinine C.</title>
        <authorList>
            <person name="Haas H."/>
            <person name="Schoeser M."/>
            <person name="Lesuisse E."/>
            <person name="Ernst J.F."/>
            <person name="Parson W."/>
            <person name="Abt B."/>
            <person name="Winkelmann G."/>
            <person name="Oberegger H."/>
        </authorList>
    </citation>
    <scope>NUCLEOTIDE SEQUENCE [GENOMIC DNA]</scope>
    <scope>FUNCTION</scope>
</reference>
<reference key="2">
    <citation type="journal article" date="2005" name="Nature">
        <title>Sequencing of Aspergillus nidulans and comparative analysis with A. fumigatus and A. oryzae.</title>
        <authorList>
            <person name="Galagan J.E."/>
            <person name="Calvo S.E."/>
            <person name="Cuomo C."/>
            <person name="Ma L.-J."/>
            <person name="Wortman J.R."/>
            <person name="Batzoglou S."/>
            <person name="Lee S.-I."/>
            <person name="Bastuerkmen M."/>
            <person name="Spevak C.C."/>
            <person name="Clutterbuck J."/>
            <person name="Kapitonov V."/>
            <person name="Jurka J."/>
            <person name="Scazzocchio C."/>
            <person name="Farman M.L."/>
            <person name="Butler J."/>
            <person name="Purcell S."/>
            <person name="Harris S."/>
            <person name="Braus G.H."/>
            <person name="Draht O."/>
            <person name="Busch S."/>
            <person name="D'Enfert C."/>
            <person name="Bouchier C."/>
            <person name="Goldman G.H."/>
            <person name="Bell-Pedersen D."/>
            <person name="Griffiths-Jones S."/>
            <person name="Doonan J.H."/>
            <person name="Yu J."/>
            <person name="Vienken K."/>
            <person name="Pain A."/>
            <person name="Freitag M."/>
            <person name="Selker E.U."/>
            <person name="Archer D.B."/>
            <person name="Penalva M.A."/>
            <person name="Oakley B.R."/>
            <person name="Momany M."/>
            <person name="Tanaka T."/>
            <person name="Kumagai T."/>
            <person name="Asai K."/>
            <person name="Machida M."/>
            <person name="Nierman W.C."/>
            <person name="Denning D.W."/>
            <person name="Caddick M.X."/>
            <person name="Hynes M."/>
            <person name="Paoletti M."/>
            <person name="Fischer R."/>
            <person name="Miller B.L."/>
            <person name="Dyer P.S."/>
            <person name="Sachs M.S."/>
            <person name="Osmani S.A."/>
            <person name="Birren B.W."/>
        </authorList>
    </citation>
    <scope>NUCLEOTIDE SEQUENCE [LARGE SCALE GENOMIC DNA]</scope>
    <source>
        <strain>FGSC A4 / ATCC 38163 / CBS 112.46 / NRRL 194 / M139</strain>
    </source>
</reference>
<reference key="3">
    <citation type="journal article" date="2009" name="Fungal Genet. Biol.">
        <title>The 2008 update of the Aspergillus nidulans genome annotation: a community effort.</title>
        <authorList>
            <person name="Wortman J.R."/>
            <person name="Gilsenan J.M."/>
            <person name="Joardar V."/>
            <person name="Deegan J."/>
            <person name="Clutterbuck J."/>
            <person name="Andersen M.R."/>
            <person name="Archer D."/>
            <person name="Bencina M."/>
            <person name="Braus G."/>
            <person name="Coutinho P."/>
            <person name="von Dohren H."/>
            <person name="Doonan J."/>
            <person name="Driessen A.J."/>
            <person name="Durek P."/>
            <person name="Espeso E."/>
            <person name="Fekete E."/>
            <person name="Flipphi M."/>
            <person name="Estrada C.G."/>
            <person name="Geysens S."/>
            <person name="Goldman G."/>
            <person name="de Groot P.W."/>
            <person name="Hansen K."/>
            <person name="Harris S.D."/>
            <person name="Heinekamp T."/>
            <person name="Helmstaedt K."/>
            <person name="Henrissat B."/>
            <person name="Hofmann G."/>
            <person name="Homan T."/>
            <person name="Horio T."/>
            <person name="Horiuchi H."/>
            <person name="James S."/>
            <person name="Jones M."/>
            <person name="Karaffa L."/>
            <person name="Karanyi Z."/>
            <person name="Kato M."/>
            <person name="Keller N."/>
            <person name="Kelly D.E."/>
            <person name="Kiel J.A."/>
            <person name="Kim J.M."/>
            <person name="van der Klei I.J."/>
            <person name="Klis F.M."/>
            <person name="Kovalchuk A."/>
            <person name="Krasevec N."/>
            <person name="Kubicek C.P."/>
            <person name="Liu B."/>
            <person name="Maccabe A."/>
            <person name="Meyer V."/>
            <person name="Mirabito P."/>
            <person name="Miskei M."/>
            <person name="Mos M."/>
            <person name="Mullins J."/>
            <person name="Nelson D.R."/>
            <person name="Nielsen J."/>
            <person name="Oakley B.R."/>
            <person name="Osmani S.A."/>
            <person name="Pakula T."/>
            <person name="Paszewski A."/>
            <person name="Paulsen I."/>
            <person name="Pilsyk S."/>
            <person name="Pocsi I."/>
            <person name="Punt P.J."/>
            <person name="Ram A.F."/>
            <person name="Ren Q."/>
            <person name="Robellet X."/>
            <person name="Robson G."/>
            <person name="Seiboth B."/>
            <person name="van Solingen P."/>
            <person name="Specht T."/>
            <person name="Sun J."/>
            <person name="Taheri-Talesh N."/>
            <person name="Takeshita N."/>
            <person name="Ussery D."/>
            <person name="vanKuyk P.A."/>
            <person name="Visser H."/>
            <person name="van de Vondervoort P.J."/>
            <person name="de Vries R.P."/>
            <person name="Walton J."/>
            <person name="Xiang X."/>
            <person name="Xiong Y."/>
            <person name="Zeng A.P."/>
            <person name="Brandt B.W."/>
            <person name="Cornell M.J."/>
            <person name="van den Hondel C.A."/>
            <person name="Visser J."/>
            <person name="Oliver S.G."/>
            <person name="Turner G."/>
        </authorList>
    </citation>
    <scope>GENOME REANNOTATION</scope>
    <source>
        <strain>FGSC A4 / ATCC 38163 / CBS 112.46 / NRRL 194 / M139</strain>
    </source>
</reference>
<name>MIRB_EMENI</name>